<organism>
    <name type="scientific">Penicillium roqueforti (strain FM164)</name>
    <dbReference type="NCBI Taxonomy" id="1365484"/>
    <lineage>
        <taxon>Eukaryota</taxon>
        <taxon>Fungi</taxon>
        <taxon>Dikarya</taxon>
        <taxon>Ascomycota</taxon>
        <taxon>Pezizomycotina</taxon>
        <taxon>Eurotiomycetes</taxon>
        <taxon>Eurotiomycetidae</taxon>
        <taxon>Eurotiales</taxon>
        <taxon>Aspergillaceae</taxon>
        <taxon>Penicillium</taxon>
    </lineage>
</organism>
<name>ANUF_PENRF</name>
<feature type="chain" id="PRO_0000458203" description="Short-chain dehydrogenase anuF">
    <location>
        <begin position="1"/>
        <end position="276"/>
    </location>
</feature>
<feature type="active site" description="Proton acceptor" evidence="3">
    <location>
        <position position="176"/>
    </location>
</feature>
<feature type="active site" description="Proton donor" evidence="2">
    <location>
        <position position="176"/>
    </location>
</feature>
<feature type="active site" description="Lowers pKa of active site Tyr" evidence="2">
    <location>
        <position position="180"/>
    </location>
</feature>
<feature type="binding site" evidence="1">
    <location>
        <position position="18"/>
    </location>
    <ligand>
        <name>NADP(+)</name>
        <dbReference type="ChEBI" id="CHEBI:58349"/>
    </ligand>
</feature>
<feature type="binding site" evidence="1">
    <location>
        <position position="68"/>
    </location>
    <ligand>
        <name>NADP(+)</name>
        <dbReference type="ChEBI" id="CHEBI:58349"/>
    </ligand>
</feature>
<feature type="binding site" evidence="1">
    <location>
        <position position="130"/>
    </location>
    <ligand>
        <name>NADP(+)</name>
        <dbReference type="ChEBI" id="CHEBI:58349"/>
    </ligand>
</feature>
<feature type="binding site" evidence="2">
    <location>
        <position position="176"/>
    </location>
    <ligand>
        <name>NADP(+)</name>
        <dbReference type="ChEBI" id="CHEBI:58349"/>
    </ligand>
</feature>
<feature type="binding site" evidence="2">
    <location>
        <position position="180"/>
    </location>
    <ligand>
        <name>NADP(+)</name>
        <dbReference type="ChEBI" id="CHEBI:58349"/>
    </ligand>
</feature>
<feature type="binding site" evidence="2">
    <location>
        <position position="209"/>
    </location>
    <ligand>
        <name>NADP(+)</name>
        <dbReference type="ChEBI" id="CHEBI:58349"/>
    </ligand>
</feature>
<feature type="binding site" evidence="1">
    <location>
        <position position="211"/>
    </location>
    <ligand>
        <name>NADP(+)</name>
        <dbReference type="ChEBI" id="CHEBI:58349"/>
    </ligand>
</feature>
<dbReference type="EC" id="1.1.1.-" evidence="4"/>
<dbReference type="EMBL" id="HG792017">
    <property type="protein sequence ID" value="CDM34455.1"/>
    <property type="molecule type" value="Genomic_DNA"/>
</dbReference>
<dbReference type="SMR" id="W6QDA7"/>
<dbReference type="STRING" id="1365484.W6QDA7"/>
<dbReference type="OMA" id="SEMNAFW"/>
<dbReference type="OrthoDB" id="5840532at2759"/>
<dbReference type="Proteomes" id="UP000030686">
    <property type="component" value="Unassembled WGS sequence"/>
</dbReference>
<dbReference type="GO" id="GO:0016616">
    <property type="term" value="F:oxidoreductase activity, acting on the CH-OH group of donors, NAD or NADP as acceptor"/>
    <property type="evidence" value="ECO:0007669"/>
    <property type="project" value="TreeGrafter"/>
</dbReference>
<dbReference type="GO" id="GO:0044550">
    <property type="term" value="P:secondary metabolite biosynthetic process"/>
    <property type="evidence" value="ECO:0007669"/>
    <property type="project" value="UniProtKB-ARBA"/>
</dbReference>
<dbReference type="CDD" id="cd05233">
    <property type="entry name" value="SDR_c"/>
    <property type="match status" value="1"/>
</dbReference>
<dbReference type="FunFam" id="3.40.50.720:FF:000084">
    <property type="entry name" value="Short-chain dehydrogenase reductase"/>
    <property type="match status" value="1"/>
</dbReference>
<dbReference type="Gene3D" id="3.40.50.720">
    <property type="entry name" value="NAD(P)-binding Rossmann-like Domain"/>
    <property type="match status" value="1"/>
</dbReference>
<dbReference type="InterPro" id="IPR036291">
    <property type="entry name" value="NAD(P)-bd_dom_sf"/>
</dbReference>
<dbReference type="InterPro" id="IPR020904">
    <property type="entry name" value="Sc_DH/Rdtase_CS"/>
</dbReference>
<dbReference type="InterPro" id="IPR002347">
    <property type="entry name" value="SDR_fam"/>
</dbReference>
<dbReference type="PANTHER" id="PTHR42760">
    <property type="entry name" value="SHORT-CHAIN DEHYDROGENASES/REDUCTASES FAMILY MEMBER"/>
    <property type="match status" value="1"/>
</dbReference>
<dbReference type="Pfam" id="PF13561">
    <property type="entry name" value="adh_short_C2"/>
    <property type="match status" value="1"/>
</dbReference>
<dbReference type="PRINTS" id="PR00081">
    <property type="entry name" value="GDHRDH"/>
</dbReference>
<dbReference type="PRINTS" id="PR00080">
    <property type="entry name" value="SDRFAMILY"/>
</dbReference>
<dbReference type="SUPFAM" id="SSF51735">
    <property type="entry name" value="NAD(P)-binding Rossmann-fold domains"/>
    <property type="match status" value="1"/>
</dbReference>
<dbReference type="PROSITE" id="PS00061">
    <property type="entry name" value="ADH_SHORT"/>
    <property type="match status" value="1"/>
</dbReference>
<accession>W6QDA7</accession>
<protein>
    <recommendedName>
        <fullName evidence="5">Short-chain dehydrogenase anuF</fullName>
        <ecNumber evidence="4">1.1.1.-</ecNumber>
    </recommendedName>
    <alternativeName>
        <fullName evidence="5">Annullatin D biosynthesis cluster protein F</fullName>
    </alternativeName>
</protein>
<comment type="function">
    <text evidence="4 7">Cytochrome P450 monooxygenase; part of the gene cluster that mediates the biosynthesis of annullatin D, an alkylated aromatic polyketide with a fused dihydrobenzofuran lactone ring system that exhibits potent agonistic activities toward the cannabinoid receptors (PubMed:35939524). Within the pathway, anuF is involved in the formation of (2R)-annullatin F from the diastereomer of (2S,9S)-annullatin H (compound 12) (PubMed:35939524). The annullatin backbone 2-hydroxymethyl-3-pentylphenol is assembled from one acetyl-CoA starter unit and 5 malonyl-CoA elongation units by cooperation of the highly reducing polyketide synthase anuA, the short-chain dehydrogenase anuB and the oxidoreductase anuC, before being hydroxylated at the C-5 alkyl chain by the cytochrome P450 monooxygenase anuE to form (8S)-annullatin E. The prenyltransferase anuH subsequently installs one isoprenyl group at the benzene ring to form (8S)-annullatin J. Enzymatic or nonenzymatic dihydro-benzofuran ring formation between the prenyl and the phenolic hydroxyl groups in (8S)-annullatin J results in two diastereomers (2S,9S)-annullatin H and compound 12. The intermediate (2S,9S)-annullatin H is then converted to (2S,9S)-annullatin D by the FAD-linked oxidoreductase anuG-catalyzed five-member lactone ring formation. The isomer 12 acts as a substrate for the short-chain dehydrogenase anuF and is oxidized to (2R)-annullatin F, which is subsequently acetylated by an acetyltransferase leading to (2R)-annullatin G formation. The remaining enzymes identified within the cluster, anuD, anuI and anuJ, seem not to be involved in annullatin biosynthesis (Probable).</text>
</comment>
<comment type="catalytic activity">
    <reaction evidence="4">
        <text>(2R,9S)-annullatin H + A = (2R)-annullatin F + AH2</text>
        <dbReference type="Rhea" id="RHEA:76427"/>
        <dbReference type="ChEBI" id="CHEBI:13193"/>
        <dbReference type="ChEBI" id="CHEBI:17499"/>
        <dbReference type="ChEBI" id="CHEBI:195225"/>
        <dbReference type="ChEBI" id="CHEBI:195226"/>
    </reaction>
    <physiologicalReaction direction="left-to-right" evidence="4">
        <dbReference type="Rhea" id="RHEA:76428"/>
    </physiologicalReaction>
</comment>
<comment type="disruption phenotype">
    <text evidence="4">Abolishes the production of (2R)-annullatin F and (2R)-annullatin G but not that of (2S,9S)-annullatin D and (2S,9S)-annullatin H.</text>
</comment>
<comment type="similarity">
    <text evidence="6">Belongs to the short-chain dehydrogenases/reductases (SDR) family.</text>
</comment>
<reference key="1">
    <citation type="journal article" date="2014" name="Nat. Commun.">
        <title>Multiple recent horizontal transfers of a large genomic region in cheese making fungi.</title>
        <authorList>
            <person name="Cheeseman K."/>
            <person name="Ropars J."/>
            <person name="Renault P."/>
            <person name="Dupont J."/>
            <person name="Gouzy J."/>
            <person name="Branca A."/>
            <person name="Abraham A.-L."/>
            <person name="Ceppi M."/>
            <person name="Conseiller E."/>
            <person name="Debuchy R."/>
            <person name="Malagnac F."/>
            <person name="Goarin A."/>
            <person name="Silar P."/>
            <person name="Lacoste S."/>
            <person name="Sallet E."/>
            <person name="Bensimon A."/>
            <person name="Giraud T."/>
            <person name="Brygoo Y."/>
        </authorList>
    </citation>
    <scope>NUCLEOTIDE SEQUENCE [LARGE SCALE GENOMIC DNA]</scope>
    <source>
        <strain>FM164</strain>
    </source>
</reference>
<reference key="2">
    <citation type="journal article" date="2022" name="Org. Lett.">
        <title>Biosynthesis of Annullatin D in Penicillium roqueforti Implies Oxidative Lactonization between Two Hydroxyl Groups Catalyzed by a BBE-like Enzyme.</title>
        <authorList>
            <person name="Xiang P."/>
            <person name="Kemmerich B."/>
            <person name="Yang L."/>
            <person name="Li S.M."/>
        </authorList>
    </citation>
    <scope>FUNCTION</scope>
    <scope>CATALYTIC ACTIVITY</scope>
    <scope>DISRUPTION PHENOTYPE</scope>
    <scope>PATHWAY</scope>
</reference>
<sequence>MALQLNGVAVVTGAGSGIGKAVALAYAAEGARGVVIADLNLEAALQTARESESIATSPTYRALPVAVDVTDEKSVDRMVTAAVQAFDRIDYSVNSAGIGVKHHKPVYKAEVSEMNAFWQVNVLGTLNCIKSVTKVMKSQSVSTLNKQGKSRQVGRGVILNVGSCNSYIATPDIVPYTTTKHAVMGLTKSAALDLAPHEIRVNAICPGWVNTPMVTAAINGNPDLPEMMRTIIPMSRIAEPEEIADVVLFMTSPRSSYVTGVGWVVDGGTTLQVQTC</sequence>
<proteinExistence type="evidence at protein level"/>
<evidence type="ECO:0000250" key="1">
    <source>
        <dbReference type="UniProtKB" id="L0E2Z4"/>
    </source>
</evidence>
<evidence type="ECO:0000250" key="2">
    <source>
        <dbReference type="UniProtKB" id="O93868"/>
    </source>
</evidence>
<evidence type="ECO:0000250" key="3">
    <source>
        <dbReference type="UniProtKB" id="Q92506"/>
    </source>
</evidence>
<evidence type="ECO:0000269" key="4">
    <source>
    </source>
</evidence>
<evidence type="ECO:0000303" key="5">
    <source>
    </source>
</evidence>
<evidence type="ECO:0000305" key="6"/>
<evidence type="ECO:0000305" key="7">
    <source>
    </source>
</evidence>
<gene>
    <name evidence="5" type="primary">anuF</name>
    <name type="ORF">PROQFM164_S03g001179</name>
</gene>
<keyword id="KW-0521">NADP</keyword>
<keyword id="KW-0560">Oxidoreductase</keyword>
<keyword id="KW-1185">Reference proteome</keyword>